<comment type="function">
    <text evidence="3">Reductase with a preference for aliphatic substrates. Can also act on small aromatic aldehydes, steroid aldehydes and some ketone substrates.</text>
</comment>
<comment type="catalytic activity">
    <reaction>
        <text>an alditol + NAD(+) = an aldose + NADH + H(+)</text>
        <dbReference type="Rhea" id="RHEA:12785"/>
        <dbReference type="Rhea" id="RHEA-COMP:9554"/>
        <dbReference type="Rhea" id="RHEA-COMP:9555"/>
        <dbReference type="ChEBI" id="CHEBI:15378"/>
        <dbReference type="ChEBI" id="CHEBI:15693"/>
        <dbReference type="ChEBI" id="CHEBI:17522"/>
        <dbReference type="ChEBI" id="CHEBI:57540"/>
        <dbReference type="ChEBI" id="CHEBI:57945"/>
        <dbReference type="EC" id="1.1.1.21"/>
    </reaction>
</comment>
<comment type="catalytic activity">
    <reaction>
        <text>an alditol + NADP(+) = an aldose + NADPH + H(+)</text>
        <dbReference type="Rhea" id="RHEA:12789"/>
        <dbReference type="Rhea" id="RHEA-COMP:9554"/>
        <dbReference type="Rhea" id="RHEA-COMP:9555"/>
        <dbReference type="ChEBI" id="CHEBI:15378"/>
        <dbReference type="ChEBI" id="CHEBI:15693"/>
        <dbReference type="ChEBI" id="CHEBI:17522"/>
        <dbReference type="ChEBI" id="CHEBI:57783"/>
        <dbReference type="ChEBI" id="CHEBI:58349"/>
        <dbReference type="EC" id="1.1.1.21"/>
    </reaction>
</comment>
<comment type="subunit">
    <text evidence="1">Monomer.</text>
</comment>
<comment type="subcellular location">
    <subcellularLocation>
        <location evidence="1">Cytoplasm</location>
    </subcellularLocation>
</comment>
<comment type="tissue specificity">
    <text evidence="3">Detected at very low levels in urinary bladder, testis and jejunum.</text>
</comment>
<comment type="induction">
    <text evidence="1 3">By FGF-1 (By similarity). Up-regulated by calpain inhibitor I (N-acetyl-leucyl-leucyl-norleucinal/ALLN).</text>
</comment>
<comment type="similarity">
    <text evidence="4">Belongs to the aldo/keto reductase family.</text>
</comment>
<proteinExistence type="evidence at protein level"/>
<organism>
    <name type="scientific">Cricetulus griseus</name>
    <name type="common">Chinese hamster</name>
    <name type="synonym">Cricetulus barabensis griseus</name>
    <dbReference type="NCBI Taxonomy" id="10029"/>
    <lineage>
        <taxon>Eukaryota</taxon>
        <taxon>Metazoa</taxon>
        <taxon>Chordata</taxon>
        <taxon>Craniata</taxon>
        <taxon>Vertebrata</taxon>
        <taxon>Euteleostomi</taxon>
        <taxon>Mammalia</taxon>
        <taxon>Eutheria</taxon>
        <taxon>Euarchontoglires</taxon>
        <taxon>Glires</taxon>
        <taxon>Rodentia</taxon>
        <taxon>Myomorpha</taxon>
        <taxon>Muroidea</taxon>
        <taxon>Cricetidae</taxon>
        <taxon>Cricetinae</taxon>
        <taxon>Cricetulus</taxon>
    </lineage>
</organism>
<sequence length="316" mass="36340">MSTFVELSTKAKMPIVGLGTWQSPPGQVKEAVKVAIDAGYRHIDCAYAYYNEHEVGEAIQEKIKEKAVRREDLFIVSKLWPTCFERKLLKEAFQKTLTDLKLDYLDLYLIHWPQGLQPGKELFPKDDQGNVLTSKITFLDAWEVMEELVDEGLVKALGVSNFNHFQIERILNKPGLKHKPVTNQVECHPYLTQEKLIEYCHSKGITVTAYSPLGSPNRPWAKPEDPSLLEDPKIKEIAAKHKKTSAQVLIRFHIQRNVVVIPKSVTPARIHENFQVFDFQLSDQEMATILGFNRNWRACLLPETVNMEEYPYDAEY</sequence>
<accession>O08782</accession>
<feature type="chain" id="PRO_0000124630" description="Aldose reductase-related protein 2">
    <location>
        <begin position="1"/>
        <end position="316"/>
    </location>
</feature>
<feature type="active site" description="Proton donor" evidence="1">
    <location>
        <position position="49"/>
    </location>
</feature>
<feature type="binding site" evidence="1">
    <location>
        <position position="111"/>
    </location>
    <ligand>
        <name>substrate</name>
    </ligand>
</feature>
<feature type="binding site" evidence="2">
    <location>
        <begin position="211"/>
        <end position="273"/>
    </location>
    <ligand>
        <name>NADP(+)</name>
        <dbReference type="ChEBI" id="CHEBI:58349"/>
    </ligand>
</feature>
<feature type="site" description="Lowers pKa of active site Tyr" evidence="1">
    <location>
        <position position="78"/>
    </location>
</feature>
<feature type="strand" evidence="5">
    <location>
        <begin position="4"/>
        <end position="6"/>
    </location>
</feature>
<feature type="strand" evidence="5">
    <location>
        <begin position="12"/>
        <end position="16"/>
    </location>
</feature>
<feature type="helix" evidence="5">
    <location>
        <begin position="25"/>
        <end position="38"/>
    </location>
</feature>
<feature type="strand" evidence="5">
    <location>
        <begin position="42"/>
        <end position="44"/>
    </location>
</feature>
<feature type="helix" evidence="5">
    <location>
        <begin position="47"/>
        <end position="49"/>
    </location>
</feature>
<feature type="helix" evidence="5">
    <location>
        <begin position="52"/>
        <end position="64"/>
    </location>
</feature>
<feature type="helix" evidence="5">
    <location>
        <begin position="70"/>
        <end position="72"/>
    </location>
</feature>
<feature type="strand" evidence="5">
    <location>
        <begin position="74"/>
        <end position="79"/>
    </location>
</feature>
<feature type="helix" evidence="5">
    <location>
        <begin position="81"/>
        <end position="83"/>
    </location>
</feature>
<feature type="helix" evidence="5">
    <location>
        <begin position="86"/>
        <end position="100"/>
    </location>
</feature>
<feature type="strand" evidence="5">
    <location>
        <begin position="105"/>
        <end position="111"/>
    </location>
</feature>
<feature type="helix" evidence="5">
    <location>
        <begin position="138"/>
        <end position="150"/>
    </location>
</feature>
<feature type="strand" evidence="5">
    <location>
        <begin position="153"/>
        <end position="155"/>
    </location>
</feature>
<feature type="strand" evidence="5">
    <location>
        <begin position="157"/>
        <end position="161"/>
    </location>
</feature>
<feature type="helix" evidence="5">
    <location>
        <begin position="164"/>
        <end position="171"/>
    </location>
</feature>
<feature type="strand" evidence="5">
    <location>
        <begin position="182"/>
        <end position="186"/>
    </location>
</feature>
<feature type="helix" evidence="5">
    <location>
        <begin position="194"/>
        <end position="202"/>
    </location>
</feature>
<feature type="strand" evidence="5">
    <location>
        <begin position="206"/>
        <end position="210"/>
    </location>
</feature>
<feature type="strand" evidence="5">
    <location>
        <begin position="218"/>
        <end position="220"/>
    </location>
</feature>
<feature type="turn" evidence="5">
    <location>
        <begin position="228"/>
        <end position="230"/>
    </location>
</feature>
<feature type="helix" evidence="5">
    <location>
        <begin position="232"/>
        <end position="240"/>
    </location>
</feature>
<feature type="helix" evidence="5">
    <location>
        <begin position="245"/>
        <end position="254"/>
    </location>
</feature>
<feature type="turn" evidence="5">
    <location>
        <begin position="255"/>
        <end position="257"/>
    </location>
</feature>
<feature type="helix" evidence="5">
    <location>
        <begin position="267"/>
        <end position="273"/>
    </location>
</feature>
<feature type="helix" evidence="5">
    <location>
        <begin position="283"/>
        <end position="290"/>
    </location>
</feature>
<feature type="helix" evidence="5">
    <location>
        <begin position="302"/>
        <end position="304"/>
    </location>
</feature>
<feature type="strand" evidence="5">
    <location>
        <begin position="305"/>
        <end position="307"/>
    </location>
</feature>
<protein>
    <recommendedName>
        <fullName>Aldose reductase-related protein 2</fullName>
        <shortName>AR</shortName>
        <ecNumber>1.1.1.21</ecNumber>
    </recommendedName>
    <alternativeName>
        <fullName>Aldehyde reductase</fullName>
    </alternativeName>
    <alternativeName>
        <fullName>Aldo-keto reductase</fullName>
    </alternativeName>
</protein>
<keyword id="KW-0002">3D-structure</keyword>
<keyword id="KW-0963">Cytoplasm</keyword>
<keyword id="KW-0521">NADP</keyword>
<keyword id="KW-0560">Oxidoreductase</keyword>
<dbReference type="EC" id="1.1.1.21"/>
<dbReference type="EMBL" id="U81045">
    <property type="protein sequence ID" value="AAC53199.1"/>
    <property type="molecule type" value="mRNA"/>
</dbReference>
<dbReference type="RefSeq" id="NP_001233680.1">
    <property type="nucleotide sequence ID" value="NM_001246751.1"/>
</dbReference>
<dbReference type="PDB" id="1C9W">
    <property type="method" value="X-ray"/>
    <property type="resolution" value="2.40 A"/>
    <property type="chains" value="A=2-316"/>
</dbReference>
<dbReference type="PDBsum" id="1C9W"/>
<dbReference type="SMR" id="O08782"/>
<dbReference type="PaxDb" id="10029-NP_001233680.1"/>
<dbReference type="Ensembl" id="ENSCGRT00001022560.1">
    <property type="protein sequence ID" value="ENSCGRP00001018316.1"/>
    <property type="gene ID" value="ENSCGRG00001018111.1"/>
</dbReference>
<dbReference type="GeneID" id="100689318"/>
<dbReference type="KEGG" id="cge:100689318"/>
<dbReference type="CTD" id="14187"/>
<dbReference type="eggNOG" id="KOG1577">
    <property type="taxonomic scope" value="Eukaryota"/>
</dbReference>
<dbReference type="GeneTree" id="ENSGT00940000154773"/>
<dbReference type="OMA" id="WGYDIFE"/>
<dbReference type="OrthoDB" id="416253at2759"/>
<dbReference type="EvolutionaryTrace" id="O08782"/>
<dbReference type="Proteomes" id="UP000694386">
    <property type="component" value="Unplaced"/>
</dbReference>
<dbReference type="Proteomes" id="UP001108280">
    <property type="component" value="Chromosome 1"/>
</dbReference>
<dbReference type="GO" id="GO:0005737">
    <property type="term" value="C:cytoplasm"/>
    <property type="evidence" value="ECO:0007669"/>
    <property type="project" value="UniProtKB-SubCell"/>
</dbReference>
<dbReference type="GO" id="GO:0004032">
    <property type="term" value="F:aldose reductase (NADPH) activity"/>
    <property type="evidence" value="ECO:0007669"/>
    <property type="project" value="RHEA"/>
</dbReference>
<dbReference type="CDD" id="cd19107">
    <property type="entry name" value="AKR_AKR1B1-19"/>
    <property type="match status" value="1"/>
</dbReference>
<dbReference type="FunFam" id="3.20.20.100:FF:000068">
    <property type="entry name" value="Aldo-keto reductase family 1 member B10"/>
    <property type="match status" value="1"/>
</dbReference>
<dbReference type="Gene3D" id="3.20.20.100">
    <property type="entry name" value="NADP-dependent oxidoreductase domain"/>
    <property type="match status" value="1"/>
</dbReference>
<dbReference type="InterPro" id="IPR020471">
    <property type="entry name" value="AKR"/>
</dbReference>
<dbReference type="InterPro" id="IPR018170">
    <property type="entry name" value="Aldo/ket_reductase_CS"/>
</dbReference>
<dbReference type="InterPro" id="IPR023210">
    <property type="entry name" value="NADP_OxRdtase_dom"/>
</dbReference>
<dbReference type="InterPro" id="IPR036812">
    <property type="entry name" value="NADP_OxRdtase_dom_sf"/>
</dbReference>
<dbReference type="PANTHER" id="PTHR11732">
    <property type="entry name" value="ALDO/KETO REDUCTASE"/>
    <property type="match status" value="1"/>
</dbReference>
<dbReference type="Pfam" id="PF00248">
    <property type="entry name" value="Aldo_ket_red"/>
    <property type="match status" value="1"/>
</dbReference>
<dbReference type="PIRSF" id="PIRSF000097">
    <property type="entry name" value="AKR"/>
    <property type="match status" value="1"/>
</dbReference>
<dbReference type="PRINTS" id="PR00069">
    <property type="entry name" value="ALDKETRDTASE"/>
</dbReference>
<dbReference type="SUPFAM" id="SSF51430">
    <property type="entry name" value="NAD(P)-linked oxidoreductase"/>
    <property type="match status" value="1"/>
</dbReference>
<dbReference type="PROSITE" id="PS00798">
    <property type="entry name" value="ALDOKETO_REDUCTASE_1"/>
    <property type="match status" value="1"/>
</dbReference>
<dbReference type="PROSITE" id="PS00062">
    <property type="entry name" value="ALDOKETO_REDUCTASE_2"/>
    <property type="match status" value="1"/>
</dbReference>
<dbReference type="PROSITE" id="PS00063">
    <property type="entry name" value="ALDOKETO_REDUCTASE_3"/>
    <property type="match status" value="1"/>
</dbReference>
<name>ALD2_CRIGR</name>
<evidence type="ECO:0000250" key="1"/>
<evidence type="ECO:0000269" key="2">
    <source>
    </source>
</evidence>
<evidence type="ECO:0000269" key="3">
    <source>
    </source>
</evidence>
<evidence type="ECO:0000305" key="4"/>
<evidence type="ECO:0007829" key="5">
    <source>
        <dbReference type="PDB" id="1C9W"/>
    </source>
</evidence>
<reference key="1">
    <citation type="journal article" date="1997" name="J. Biol. Chem.">
        <title>Cloning, sequencing, and enzymatic activity of an inducible aldo-keto reductase from Chinese hamster ovary cells.</title>
        <authorList>
            <person name="Hyndman D.J."/>
            <person name="Takenoshita R."/>
            <person name="Vera N.L."/>
            <person name="Pang S.C."/>
            <person name="Flynn T.G."/>
        </authorList>
    </citation>
    <scope>NUCLEOTIDE SEQUENCE [MRNA]</scope>
    <scope>FUNCTION</scope>
    <scope>INDUCTION</scope>
    <scope>TISSUE SPECIFICITY</scope>
    <source>
        <tissue>Ovary</tissue>
    </source>
</reference>
<reference key="2">
    <citation type="journal article" date="2000" name="Proteins">
        <title>Crystal structure of CHO reductase, a member of the aldo-keto reductase superfamily.</title>
        <authorList>
            <person name="Ye Q."/>
            <person name="Hyndman D.J."/>
            <person name="Li X."/>
            <person name="Flynn T.G."/>
            <person name="Jia Z."/>
        </authorList>
    </citation>
    <scope>X-RAY CRYSTALLOGRAPHY (2.4 ANGSTROMS) IN COMPLEX WITH NADPH</scope>
</reference>
<gene>
    <name type="primary">AKR1B8</name>
</gene>